<protein>
    <recommendedName>
        <fullName evidence="1">LPS-assembly protein LptD</fullName>
    </recommendedName>
</protein>
<reference key="1">
    <citation type="journal article" date="2004" name="PLoS Biol.">
        <title>Genomic insights into methanotrophy: the complete genome sequence of Methylococcus capsulatus (Bath).</title>
        <authorList>
            <person name="Ward N.L."/>
            <person name="Larsen O."/>
            <person name="Sakwa J."/>
            <person name="Bruseth L."/>
            <person name="Khouri H.M."/>
            <person name="Durkin A.S."/>
            <person name="Dimitrov G."/>
            <person name="Jiang L."/>
            <person name="Scanlan D."/>
            <person name="Kang K.H."/>
            <person name="Lewis M.R."/>
            <person name="Nelson K.E."/>
            <person name="Methe B.A."/>
            <person name="Wu M."/>
            <person name="Heidelberg J.F."/>
            <person name="Paulsen I.T."/>
            <person name="Fouts D.E."/>
            <person name="Ravel J."/>
            <person name="Tettelin H."/>
            <person name="Ren Q."/>
            <person name="Read T.D."/>
            <person name="DeBoy R.T."/>
            <person name="Seshadri R."/>
            <person name="Salzberg S.L."/>
            <person name="Jensen H.B."/>
            <person name="Birkeland N.K."/>
            <person name="Nelson W.C."/>
            <person name="Dodson R.J."/>
            <person name="Grindhaug S.H."/>
            <person name="Holt I.E."/>
            <person name="Eidhammer I."/>
            <person name="Jonasen I."/>
            <person name="Vanaken S."/>
            <person name="Utterback T.R."/>
            <person name="Feldblyum T.V."/>
            <person name="Fraser C.M."/>
            <person name="Lillehaug J.R."/>
            <person name="Eisen J.A."/>
        </authorList>
    </citation>
    <scope>NUCLEOTIDE SEQUENCE [LARGE SCALE GENOMIC DNA]</scope>
    <source>
        <strain>ATCC 33009 / NCIMB 11132 / Bath</strain>
    </source>
</reference>
<evidence type="ECO:0000255" key="1">
    <source>
        <dbReference type="HAMAP-Rule" id="MF_01411"/>
    </source>
</evidence>
<evidence type="ECO:0000256" key="2">
    <source>
        <dbReference type="SAM" id="MobiDB-lite"/>
    </source>
</evidence>
<evidence type="ECO:0000305" key="3"/>
<name>LPTD_METCA</name>
<organism>
    <name type="scientific">Methylococcus capsulatus (strain ATCC 33009 / NCIMB 11132 / Bath)</name>
    <dbReference type="NCBI Taxonomy" id="243233"/>
    <lineage>
        <taxon>Bacteria</taxon>
        <taxon>Pseudomonadati</taxon>
        <taxon>Pseudomonadota</taxon>
        <taxon>Gammaproteobacteria</taxon>
        <taxon>Methylococcales</taxon>
        <taxon>Methylococcaceae</taxon>
        <taxon>Methylococcus</taxon>
    </lineage>
</organism>
<proteinExistence type="inferred from homology"/>
<dbReference type="EMBL" id="AE017282">
    <property type="protein sequence ID" value="AAU93128.1"/>
    <property type="status" value="ALT_INIT"/>
    <property type="molecule type" value="Genomic_DNA"/>
</dbReference>
<dbReference type="SMR" id="Q60B79"/>
<dbReference type="STRING" id="243233.MCA0601"/>
<dbReference type="KEGG" id="mca:MCA0601"/>
<dbReference type="eggNOG" id="COG1452">
    <property type="taxonomic scope" value="Bacteria"/>
</dbReference>
<dbReference type="HOGENOM" id="CLU_009039_0_1_6"/>
<dbReference type="Proteomes" id="UP000006821">
    <property type="component" value="Chromosome"/>
</dbReference>
<dbReference type="GO" id="GO:0009279">
    <property type="term" value="C:cell outer membrane"/>
    <property type="evidence" value="ECO:0007669"/>
    <property type="project" value="UniProtKB-SubCell"/>
</dbReference>
<dbReference type="GO" id="GO:1990351">
    <property type="term" value="C:transporter complex"/>
    <property type="evidence" value="ECO:0007669"/>
    <property type="project" value="TreeGrafter"/>
</dbReference>
<dbReference type="GO" id="GO:0043165">
    <property type="term" value="P:Gram-negative-bacterium-type cell outer membrane assembly"/>
    <property type="evidence" value="ECO:0007669"/>
    <property type="project" value="UniProtKB-UniRule"/>
</dbReference>
<dbReference type="GO" id="GO:0015920">
    <property type="term" value="P:lipopolysaccharide transport"/>
    <property type="evidence" value="ECO:0007669"/>
    <property type="project" value="InterPro"/>
</dbReference>
<dbReference type="HAMAP" id="MF_01411">
    <property type="entry name" value="LPS_assembly_LptD"/>
    <property type="match status" value="1"/>
</dbReference>
<dbReference type="InterPro" id="IPR020889">
    <property type="entry name" value="LipoPS_assembly_LptD"/>
</dbReference>
<dbReference type="InterPro" id="IPR050218">
    <property type="entry name" value="LptD"/>
</dbReference>
<dbReference type="InterPro" id="IPR045659">
    <property type="entry name" value="LptD_2"/>
</dbReference>
<dbReference type="InterPro" id="IPR007543">
    <property type="entry name" value="LptD_C"/>
</dbReference>
<dbReference type="PANTHER" id="PTHR30189">
    <property type="entry name" value="LPS-ASSEMBLY PROTEIN"/>
    <property type="match status" value="1"/>
</dbReference>
<dbReference type="PANTHER" id="PTHR30189:SF1">
    <property type="entry name" value="LPS-ASSEMBLY PROTEIN LPTD"/>
    <property type="match status" value="1"/>
</dbReference>
<dbReference type="Pfam" id="PF04453">
    <property type="entry name" value="LptD"/>
    <property type="match status" value="1"/>
</dbReference>
<dbReference type="Pfam" id="PF19838">
    <property type="entry name" value="LptD_2"/>
    <property type="match status" value="1"/>
</dbReference>
<sequence>MEGPPTAAHAAAPLRTAVFLALAASWQQPAVAVGNWNCARSTDDKQWECVAKRKDGGADTPAAPGPKAPPTALGEAALSQSNRAAPSTAVSPPTGAAPVAGTGLRPPPPVPSAASPSPSTMAGGPTEDEEDEESESAESEKAESTAAPQVAEGGSAGEPGGTPPARAPRPETPLAASRFVPSGTVSVRKEAASPQSVAAHAPGAPAGWTCKPQKESRSWDCNLVGPDPRGVARPVGAAGEPPEDWAQAATITEYDEQRFDRLLGMMPSNPWAGTCARGKRESDAAKDFLLTSKDRLARKRAPVEVHGNYGEMDDQEVATFTGDAEVTRYDQHVKGDFLSLNTEADTVNARGSVFYREKGLAFASDTAFMRMEEDKGVLRNSQFIVETMPSRGVARVAHMDSDTHSHYETATYTTCPPGNTDWMLHADEVTIDKETGRGDASHAWMEFKGVPIFYTPYMDFPVDDRRQSGFLSPTFGQSKVNGFNLSVPYYFNLAPDYDLTLQAREMTSRGPLFGGDFRWLTEHQRIRLLGEVIPEDSQTKTTRGQAGFDAMGRWTDSLFTLVDLNYVSDSKYLNQLNNTLGLVSNTFVQSQAYADYTYSNGSVRLLGDYYQNIDPSIPTEQTPYYRLPSLRGNYNEQIGDSGFRFQANAEVVNFGHGGNNVKGQRLNIRPQISYPIQSPGSFLVPSVALQNTTYMLQNQAAGTGSSLNRVAPIFSVDSGLVFDRDFELGSASLRQTLEPRVFYTYVPKINQNDYPIFDSNYYDFTYYQLFRTNRFAGADRLADMNQVTLGLTSRFIDRDTGWERLTASLGKVFFITDPSVTLVNPYGANPLGVVLGPDQGQFVYGNYNKSYANVIGKVDTRLTEAFFLGGEAQLSPYTGRFERGSVGLQYNDRQNNLMNLSYRYREPLPNQPAIEQAATIGQNTTALNNTDISFRIPFLKDWHVIGRWQYSLLYNRTLESLVGLEHETCCWRFTVLGREYLNGVNQSNAPTTNTAIFVQMELKGLTRLGDQVDRFLYRAINGYRMPNEDF</sequence>
<keyword id="KW-0998">Cell outer membrane</keyword>
<keyword id="KW-0472">Membrane</keyword>
<keyword id="KW-1185">Reference proteome</keyword>
<keyword id="KW-0732">Signal</keyword>
<comment type="function">
    <text evidence="1">Together with LptE, is involved in the assembly of lipopolysaccharide (LPS) at the surface of the outer membrane.</text>
</comment>
<comment type="subunit">
    <text evidence="1">Component of the lipopolysaccharide transport and assembly complex. Interacts with LptE and LptA.</text>
</comment>
<comment type="subcellular location">
    <subcellularLocation>
        <location evidence="1">Cell outer membrane</location>
    </subcellularLocation>
</comment>
<comment type="similarity">
    <text evidence="1">Belongs to the LptD family.</text>
</comment>
<comment type="sequence caution" evidence="3">
    <conflict type="erroneous initiation">
        <sequence resource="EMBL-CDS" id="AAU93128"/>
    </conflict>
</comment>
<accession>Q60B79</accession>
<gene>
    <name evidence="1" type="primary">lptD</name>
    <name type="synonym">imp</name>
    <name type="synonym">ostA</name>
    <name type="ordered locus">MCA0601</name>
</gene>
<feature type="signal peptide" evidence="1">
    <location>
        <begin position="1"/>
        <end position="32"/>
    </location>
</feature>
<feature type="chain" id="PRO_0000281617" description="LPS-assembly protein LptD">
    <location>
        <begin position="33"/>
        <end position="1030"/>
    </location>
</feature>
<feature type="region of interest" description="Disordered" evidence="2">
    <location>
        <begin position="50"/>
        <end position="213"/>
    </location>
</feature>
<feature type="compositionally biased region" description="Polar residues" evidence="2">
    <location>
        <begin position="78"/>
        <end position="91"/>
    </location>
</feature>
<feature type="compositionally biased region" description="Acidic residues" evidence="2">
    <location>
        <begin position="126"/>
        <end position="137"/>
    </location>
</feature>
<feature type="compositionally biased region" description="Pro residues" evidence="2">
    <location>
        <begin position="161"/>
        <end position="171"/>
    </location>
</feature>